<keyword id="KW-0963">Cytoplasm</keyword>
<keyword id="KW-0378">Hydrolase</keyword>
<keyword id="KW-0694">RNA-binding</keyword>
<keyword id="KW-0820">tRNA-binding</keyword>
<comment type="function">
    <text evidence="1">Hydrolyzes ribosome-free peptidyl-tRNAs (with 1 or more amino acids incorporated), which drop off the ribosome during protein synthesis, or as a result of ribosome stalling.</text>
</comment>
<comment type="function">
    <text evidence="1">Catalyzes the release of premature peptidyl moieties from peptidyl-tRNA molecules trapped in stalled 50S ribosomal subunits, and thus maintains levels of free tRNAs and 50S ribosomes.</text>
</comment>
<comment type="catalytic activity">
    <reaction evidence="1">
        <text>an N-acyl-L-alpha-aminoacyl-tRNA + H2O = an N-acyl-L-amino acid + a tRNA + H(+)</text>
        <dbReference type="Rhea" id="RHEA:54448"/>
        <dbReference type="Rhea" id="RHEA-COMP:10123"/>
        <dbReference type="Rhea" id="RHEA-COMP:13883"/>
        <dbReference type="ChEBI" id="CHEBI:15377"/>
        <dbReference type="ChEBI" id="CHEBI:15378"/>
        <dbReference type="ChEBI" id="CHEBI:59874"/>
        <dbReference type="ChEBI" id="CHEBI:78442"/>
        <dbReference type="ChEBI" id="CHEBI:138191"/>
        <dbReference type="EC" id="3.1.1.29"/>
    </reaction>
</comment>
<comment type="subunit">
    <text evidence="1">Monomer.</text>
</comment>
<comment type="subcellular location">
    <subcellularLocation>
        <location evidence="1">Cytoplasm</location>
    </subcellularLocation>
</comment>
<comment type="similarity">
    <text evidence="1">Belongs to the PTH family.</text>
</comment>
<protein>
    <recommendedName>
        <fullName evidence="1">Peptidyl-tRNA hydrolase</fullName>
        <shortName evidence="1">Pth</shortName>
        <ecNumber evidence="1">3.1.1.29</ecNumber>
    </recommendedName>
</protein>
<organism>
    <name type="scientific">Helicobacter pylori (strain HPAG1)</name>
    <dbReference type="NCBI Taxonomy" id="357544"/>
    <lineage>
        <taxon>Bacteria</taxon>
        <taxon>Pseudomonadati</taxon>
        <taxon>Campylobacterota</taxon>
        <taxon>Epsilonproteobacteria</taxon>
        <taxon>Campylobacterales</taxon>
        <taxon>Helicobacteraceae</taxon>
        <taxon>Helicobacter</taxon>
    </lineage>
</organism>
<gene>
    <name evidence="1" type="primary">pth</name>
    <name type="ordered locus">HPAG1_1416</name>
</gene>
<reference key="1">
    <citation type="journal article" date="2006" name="Proc. Natl. Acad. Sci. U.S.A.">
        <title>The complete genome sequence of a chronic atrophic gastritis Helicobacter pylori strain: evolution during disease progression.</title>
        <authorList>
            <person name="Oh J.D."/>
            <person name="Kling-Baeckhed H."/>
            <person name="Giannakis M."/>
            <person name="Xu J."/>
            <person name="Fulton R.S."/>
            <person name="Fulton L.A."/>
            <person name="Cordum H.S."/>
            <person name="Wang C."/>
            <person name="Elliott G."/>
            <person name="Edwards J."/>
            <person name="Mardis E.R."/>
            <person name="Engstrand L.G."/>
            <person name="Gordon J.I."/>
        </authorList>
    </citation>
    <scope>NUCLEOTIDE SEQUENCE [LARGE SCALE GENOMIC DNA]</scope>
    <source>
        <strain>HPAG1</strain>
    </source>
</reference>
<dbReference type="EC" id="3.1.1.29" evidence="1"/>
<dbReference type="EMBL" id="CP000241">
    <property type="protein sequence ID" value="ABF85483.1"/>
    <property type="molecule type" value="Genomic_DNA"/>
</dbReference>
<dbReference type="RefSeq" id="WP_000173977.1">
    <property type="nucleotide sequence ID" value="NC_008086.1"/>
</dbReference>
<dbReference type="SMR" id="Q1CRD9"/>
<dbReference type="KEGG" id="hpa:HPAG1_1416"/>
<dbReference type="HOGENOM" id="CLU_062456_4_1_7"/>
<dbReference type="GO" id="GO:0005737">
    <property type="term" value="C:cytoplasm"/>
    <property type="evidence" value="ECO:0007669"/>
    <property type="project" value="UniProtKB-SubCell"/>
</dbReference>
<dbReference type="GO" id="GO:0004045">
    <property type="term" value="F:peptidyl-tRNA hydrolase activity"/>
    <property type="evidence" value="ECO:0007669"/>
    <property type="project" value="UniProtKB-UniRule"/>
</dbReference>
<dbReference type="GO" id="GO:0000049">
    <property type="term" value="F:tRNA binding"/>
    <property type="evidence" value="ECO:0007669"/>
    <property type="project" value="UniProtKB-UniRule"/>
</dbReference>
<dbReference type="GO" id="GO:0006515">
    <property type="term" value="P:protein quality control for misfolded or incompletely synthesized proteins"/>
    <property type="evidence" value="ECO:0007669"/>
    <property type="project" value="UniProtKB-UniRule"/>
</dbReference>
<dbReference type="GO" id="GO:0072344">
    <property type="term" value="P:rescue of stalled ribosome"/>
    <property type="evidence" value="ECO:0007669"/>
    <property type="project" value="UniProtKB-UniRule"/>
</dbReference>
<dbReference type="CDD" id="cd00462">
    <property type="entry name" value="PTH"/>
    <property type="match status" value="1"/>
</dbReference>
<dbReference type="Gene3D" id="3.40.50.1470">
    <property type="entry name" value="Peptidyl-tRNA hydrolase"/>
    <property type="match status" value="1"/>
</dbReference>
<dbReference type="HAMAP" id="MF_00083">
    <property type="entry name" value="Pept_tRNA_hydro_bact"/>
    <property type="match status" value="1"/>
</dbReference>
<dbReference type="InterPro" id="IPR001328">
    <property type="entry name" value="Pept_tRNA_hydro"/>
</dbReference>
<dbReference type="InterPro" id="IPR018171">
    <property type="entry name" value="Pept_tRNA_hydro_CS"/>
</dbReference>
<dbReference type="InterPro" id="IPR036416">
    <property type="entry name" value="Pept_tRNA_hydro_sf"/>
</dbReference>
<dbReference type="NCBIfam" id="TIGR00447">
    <property type="entry name" value="pth"/>
    <property type="match status" value="1"/>
</dbReference>
<dbReference type="PANTHER" id="PTHR17224">
    <property type="entry name" value="PEPTIDYL-TRNA HYDROLASE"/>
    <property type="match status" value="1"/>
</dbReference>
<dbReference type="PANTHER" id="PTHR17224:SF1">
    <property type="entry name" value="PEPTIDYL-TRNA HYDROLASE"/>
    <property type="match status" value="1"/>
</dbReference>
<dbReference type="Pfam" id="PF01195">
    <property type="entry name" value="Pept_tRNA_hydro"/>
    <property type="match status" value="1"/>
</dbReference>
<dbReference type="SUPFAM" id="SSF53178">
    <property type="entry name" value="Peptidyl-tRNA hydrolase-like"/>
    <property type="match status" value="1"/>
</dbReference>
<dbReference type="PROSITE" id="PS01195">
    <property type="entry name" value="PEPT_TRNA_HYDROL_1"/>
    <property type="match status" value="1"/>
</dbReference>
<dbReference type="PROSITE" id="PS01196">
    <property type="entry name" value="PEPT_TRNA_HYDROL_2"/>
    <property type="match status" value="1"/>
</dbReference>
<proteinExistence type="inferred from homology"/>
<feature type="chain" id="PRO_0000264047" description="Peptidyl-tRNA hydrolase">
    <location>
        <begin position="1"/>
        <end position="186"/>
    </location>
</feature>
<feature type="active site" description="Proton acceptor" evidence="1">
    <location>
        <position position="19"/>
    </location>
</feature>
<feature type="binding site" evidence="1">
    <location>
        <position position="14"/>
    </location>
    <ligand>
        <name>tRNA</name>
        <dbReference type="ChEBI" id="CHEBI:17843"/>
    </ligand>
</feature>
<feature type="binding site" evidence="1">
    <location>
        <position position="61"/>
    </location>
    <ligand>
        <name>tRNA</name>
        <dbReference type="ChEBI" id="CHEBI:17843"/>
    </ligand>
</feature>
<feature type="binding site" evidence="1">
    <location>
        <position position="63"/>
    </location>
    <ligand>
        <name>tRNA</name>
        <dbReference type="ChEBI" id="CHEBI:17843"/>
    </ligand>
</feature>
<feature type="binding site" evidence="1">
    <location>
        <position position="107"/>
    </location>
    <ligand>
        <name>tRNA</name>
        <dbReference type="ChEBI" id="CHEBI:17843"/>
    </ligand>
</feature>
<feature type="site" description="Discriminates between blocked and unblocked aminoacyl-tRNA" evidence="1">
    <location>
        <position position="9"/>
    </location>
</feature>
<feature type="site" description="Stabilizes the basic form of H active site to accept a proton" evidence="1">
    <location>
        <position position="86"/>
    </location>
</feature>
<sequence>MTLLVGLGNPTLRYAHTRHNAGFDILDSLVSELDLSFTFSPKHNACLCVYKDFILLKPQTYMNLSGESVLSTKNFYKPKELLIVHDDLDLPLGVVRFKNGGGNGGHNGLKSIDLLCSNSYYRLRVGISKGIGVIEHVLSKFHKNEEPLKNAVFEHAKNALKFFIESHDFNAMQNRFTLKKPLKIES</sequence>
<accession>Q1CRD9</accession>
<evidence type="ECO:0000255" key="1">
    <source>
        <dbReference type="HAMAP-Rule" id="MF_00083"/>
    </source>
</evidence>
<name>PTH_HELPH</name>